<keyword id="KW-1185">Reference proteome</keyword>
<proteinExistence type="evidence at protein level"/>
<protein>
    <recommendedName>
        <fullName>Uncharacterized protein Rv0499</fullName>
    </recommendedName>
</protein>
<evidence type="ECO:0000255" key="1">
    <source>
        <dbReference type="PROSITE-ProRule" id="PRU00783"/>
    </source>
</evidence>
<gene>
    <name type="ordered locus">Rv0499</name>
    <name type="ORF">MTCY20G9.25</name>
</gene>
<dbReference type="EMBL" id="AL123456">
    <property type="protein sequence ID" value="CCP43234.1"/>
    <property type="molecule type" value="Genomic_DNA"/>
</dbReference>
<dbReference type="PIR" id="F70745">
    <property type="entry name" value="F70745"/>
</dbReference>
<dbReference type="RefSeq" id="NP_215013.1">
    <property type="nucleotide sequence ID" value="NC_000962.3"/>
</dbReference>
<dbReference type="RefSeq" id="WP_003402433.1">
    <property type="nucleotide sequence ID" value="NZ_NVQJ01000002.1"/>
</dbReference>
<dbReference type="SMR" id="P9WKT9"/>
<dbReference type="STRING" id="83332.Rv0499"/>
<dbReference type="PaxDb" id="83332-Rv0499"/>
<dbReference type="DNASU" id="887243"/>
<dbReference type="GeneID" id="887243"/>
<dbReference type="KEGG" id="mtu:Rv0499"/>
<dbReference type="KEGG" id="mtv:RVBD_0499"/>
<dbReference type="TubercuList" id="Rv0499"/>
<dbReference type="eggNOG" id="COG2050">
    <property type="taxonomic scope" value="Bacteria"/>
</dbReference>
<dbReference type="InParanoid" id="P9WKT9"/>
<dbReference type="OrthoDB" id="5418286at2"/>
<dbReference type="Proteomes" id="UP000001584">
    <property type="component" value="Chromosome"/>
</dbReference>
<dbReference type="GO" id="GO:0016301">
    <property type="term" value="F:kinase activity"/>
    <property type="evidence" value="ECO:0007669"/>
    <property type="project" value="InterPro"/>
</dbReference>
<dbReference type="Gene3D" id="2.40.160.210">
    <property type="entry name" value="Acyl-CoA thioesterase, double hotdog domain"/>
    <property type="match status" value="1"/>
</dbReference>
<dbReference type="InterPro" id="IPR049450">
    <property type="entry name" value="ACOT8-like_C"/>
</dbReference>
<dbReference type="InterPro" id="IPR042171">
    <property type="entry name" value="Acyl-CoA_hotdog"/>
</dbReference>
<dbReference type="InterPro" id="IPR001206">
    <property type="entry name" value="Diacylglycerol_kinase_cat_dom"/>
</dbReference>
<dbReference type="InterPro" id="IPR029069">
    <property type="entry name" value="HotDog_dom_sf"/>
</dbReference>
<dbReference type="InterPro" id="IPR052389">
    <property type="entry name" value="Sec_Metab_Biosynth-Assoc"/>
</dbReference>
<dbReference type="InterPro" id="IPR049449">
    <property type="entry name" value="TesB_ACOT8-like_N"/>
</dbReference>
<dbReference type="PANTHER" id="PTHR38110">
    <property type="entry name" value="CHROMOSOME 23, WHOLE GENOME SHOTGUN SEQUENCE"/>
    <property type="match status" value="1"/>
</dbReference>
<dbReference type="PANTHER" id="PTHR38110:SF1">
    <property type="entry name" value="THIOESTERASE DOMAIN-CONTAINING PROTEIN"/>
    <property type="match status" value="1"/>
</dbReference>
<dbReference type="Pfam" id="PF13622">
    <property type="entry name" value="4HBT_3"/>
    <property type="match status" value="1"/>
</dbReference>
<dbReference type="Pfam" id="PF20789">
    <property type="entry name" value="4HBT_3C"/>
    <property type="match status" value="1"/>
</dbReference>
<dbReference type="SMART" id="SM00046">
    <property type="entry name" value="DAGKc"/>
    <property type="match status" value="1"/>
</dbReference>
<dbReference type="SUPFAM" id="SSF54637">
    <property type="entry name" value="Thioesterase/thiol ester dehydrase-isomerase"/>
    <property type="match status" value="2"/>
</dbReference>
<dbReference type="PROSITE" id="PS50146">
    <property type="entry name" value="DAGK"/>
    <property type="match status" value="1"/>
</dbReference>
<reference key="1">
    <citation type="journal article" date="1998" name="Nature">
        <title>Deciphering the biology of Mycobacterium tuberculosis from the complete genome sequence.</title>
        <authorList>
            <person name="Cole S.T."/>
            <person name="Brosch R."/>
            <person name="Parkhill J."/>
            <person name="Garnier T."/>
            <person name="Churcher C.M."/>
            <person name="Harris D.E."/>
            <person name="Gordon S.V."/>
            <person name="Eiglmeier K."/>
            <person name="Gas S."/>
            <person name="Barry C.E. III"/>
            <person name="Tekaia F."/>
            <person name="Badcock K."/>
            <person name="Basham D."/>
            <person name="Brown D."/>
            <person name="Chillingworth T."/>
            <person name="Connor R."/>
            <person name="Davies R.M."/>
            <person name="Devlin K."/>
            <person name="Feltwell T."/>
            <person name="Gentles S."/>
            <person name="Hamlin N."/>
            <person name="Holroyd S."/>
            <person name="Hornsby T."/>
            <person name="Jagels K."/>
            <person name="Krogh A."/>
            <person name="McLean J."/>
            <person name="Moule S."/>
            <person name="Murphy L.D."/>
            <person name="Oliver S."/>
            <person name="Osborne J."/>
            <person name="Quail M.A."/>
            <person name="Rajandream M.A."/>
            <person name="Rogers J."/>
            <person name="Rutter S."/>
            <person name="Seeger K."/>
            <person name="Skelton S."/>
            <person name="Squares S."/>
            <person name="Squares R."/>
            <person name="Sulston J.E."/>
            <person name="Taylor K."/>
            <person name="Whitehead S."/>
            <person name="Barrell B.G."/>
        </authorList>
    </citation>
    <scope>NUCLEOTIDE SEQUENCE [LARGE SCALE GENOMIC DNA]</scope>
    <source>
        <strain>ATCC 25618 / H37Rv</strain>
    </source>
</reference>
<reference key="2">
    <citation type="journal article" date="2011" name="Mol. Cell. Proteomics">
        <title>Proteogenomic analysis of Mycobacterium tuberculosis by high resolution mass spectrometry.</title>
        <authorList>
            <person name="Kelkar D.S."/>
            <person name="Kumar D."/>
            <person name="Kumar P."/>
            <person name="Balakrishnan L."/>
            <person name="Muthusamy B."/>
            <person name="Yadav A.K."/>
            <person name="Shrivastava P."/>
            <person name="Marimuthu A."/>
            <person name="Anand S."/>
            <person name="Sundaram H."/>
            <person name="Kingsbury R."/>
            <person name="Harsha H.C."/>
            <person name="Nair B."/>
            <person name="Prasad T.S."/>
            <person name="Chauhan D.S."/>
            <person name="Katoch K."/>
            <person name="Katoch V.M."/>
            <person name="Kumar P."/>
            <person name="Chaerkady R."/>
            <person name="Ramachandran S."/>
            <person name="Dash D."/>
            <person name="Pandey A."/>
        </authorList>
    </citation>
    <scope>IDENTIFICATION BY MASS SPECTROMETRY [LARGE SCALE ANALYSIS]</scope>
    <source>
        <strain>ATCC 25618 / H37Rv</strain>
    </source>
</reference>
<name>Y499_MYCTU</name>
<organism>
    <name type="scientific">Mycobacterium tuberculosis (strain ATCC 25618 / H37Rv)</name>
    <dbReference type="NCBI Taxonomy" id="83332"/>
    <lineage>
        <taxon>Bacteria</taxon>
        <taxon>Bacillati</taxon>
        <taxon>Actinomycetota</taxon>
        <taxon>Actinomycetes</taxon>
        <taxon>Mycobacteriales</taxon>
        <taxon>Mycobacteriaceae</taxon>
        <taxon>Mycobacterium</taxon>
        <taxon>Mycobacterium tuberculosis complex</taxon>
    </lineage>
</organism>
<sequence length="291" mass="30670">MNALFTTAMALRPLDSDPGNPACRVFEGELNEHWTIGPKVHGGAMVALCANAARTAYGAAGQQPMRQPVAVSASFLWAPDPGTMRLVTSIRKRGRRISVADVELTQGGRTAVHAVVTLGEPEHFLPGVDGSGGASGTAPLLSANPVVELMAPEPPEGVVPIGPGHQLAGLVHLGEGCDVRPVLSTLRSATDGRPPVIQLWARPRGVAPDALFALLCGDLSAPVTFAVDRTGWAPTVALTAYLRALPADGWLRVLCTCVEIGQDWFDEDHIVVDRLGRIVVQTRQLAMVPAQ</sequence>
<accession>P9WKT9</accession>
<accession>L0T5J6</accession>
<accession>P64719</accession>
<accession>Q11164</accession>
<feature type="chain" id="PRO_0000103703" description="Uncharacterized protein Rv0499">
    <location>
        <begin position="1"/>
        <end position="291"/>
    </location>
</feature>
<feature type="domain" description="DAGKc" evidence="1">
    <location>
        <begin position="68"/>
        <end position="205"/>
    </location>
</feature>